<accession>B6YQ63</accession>
<protein>
    <recommendedName>
        <fullName evidence="1">Small ribosomal subunit protein uS13</fullName>
    </recommendedName>
    <alternativeName>
        <fullName evidence="3">30S ribosomal protein S13</fullName>
    </alternativeName>
</protein>
<gene>
    <name evidence="1" type="primary">rpsM</name>
    <name type="ordered locus">CFPG_072</name>
</gene>
<name>RS13_AZOPC</name>
<reference key="1">
    <citation type="journal article" date="2008" name="Science">
        <title>Genome of an endosymbiont coupling N2 fixation to cellulolysis within RT protist cells in termite gut.</title>
        <authorList>
            <person name="Hongoh Y."/>
            <person name="Sharma V.K."/>
            <person name="Prakash T."/>
            <person name="Noda S."/>
            <person name="Toh H."/>
            <person name="Taylor T.D."/>
            <person name="Kudo T."/>
            <person name="Sakaki Y."/>
            <person name="Toyoda A."/>
            <person name="Hattori M."/>
            <person name="Ohkuma M."/>
        </authorList>
    </citation>
    <scope>NUCLEOTIDE SEQUENCE [LARGE SCALE GENOMIC DNA]</scope>
</reference>
<sequence>MAVRILGVDLPQNKRGEIALTYIYGIGCGLSSKILTEAGIDRDTRIKDWTDVQVAAVREIISRNFKVEGDLRSEIQLNIKRLMDIGCYRGIRHRIGLPLRGQSTKNNARTRKGKRKTVANKKRVTK</sequence>
<keyword id="KW-1185">Reference proteome</keyword>
<keyword id="KW-0687">Ribonucleoprotein</keyword>
<keyword id="KW-0689">Ribosomal protein</keyword>
<keyword id="KW-0694">RNA-binding</keyword>
<keyword id="KW-0699">rRNA-binding</keyword>
<keyword id="KW-0820">tRNA-binding</keyword>
<dbReference type="EMBL" id="AP010656">
    <property type="protein sequence ID" value="BAG83335.1"/>
    <property type="molecule type" value="Genomic_DNA"/>
</dbReference>
<dbReference type="RefSeq" id="WP_012573096.1">
    <property type="nucleotide sequence ID" value="NC_011565.1"/>
</dbReference>
<dbReference type="SMR" id="B6YQ63"/>
<dbReference type="STRING" id="511995.CFPG_072"/>
<dbReference type="KEGG" id="aps:CFPG_072"/>
<dbReference type="eggNOG" id="COG0099">
    <property type="taxonomic scope" value="Bacteria"/>
</dbReference>
<dbReference type="HOGENOM" id="CLU_103849_1_2_10"/>
<dbReference type="OrthoDB" id="9803610at2"/>
<dbReference type="Proteomes" id="UP000000723">
    <property type="component" value="Chromosome"/>
</dbReference>
<dbReference type="GO" id="GO:0005829">
    <property type="term" value="C:cytosol"/>
    <property type="evidence" value="ECO:0007669"/>
    <property type="project" value="TreeGrafter"/>
</dbReference>
<dbReference type="GO" id="GO:0015935">
    <property type="term" value="C:small ribosomal subunit"/>
    <property type="evidence" value="ECO:0007669"/>
    <property type="project" value="TreeGrafter"/>
</dbReference>
<dbReference type="GO" id="GO:0019843">
    <property type="term" value="F:rRNA binding"/>
    <property type="evidence" value="ECO:0007669"/>
    <property type="project" value="UniProtKB-UniRule"/>
</dbReference>
<dbReference type="GO" id="GO:0003735">
    <property type="term" value="F:structural constituent of ribosome"/>
    <property type="evidence" value="ECO:0007669"/>
    <property type="project" value="InterPro"/>
</dbReference>
<dbReference type="GO" id="GO:0000049">
    <property type="term" value="F:tRNA binding"/>
    <property type="evidence" value="ECO:0007669"/>
    <property type="project" value="UniProtKB-UniRule"/>
</dbReference>
<dbReference type="GO" id="GO:0006412">
    <property type="term" value="P:translation"/>
    <property type="evidence" value="ECO:0007669"/>
    <property type="project" value="UniProtKB-UniRule"/>
</dbReference>
<dbReference type="FunFam" id="1.10.8.50:FF:000001">
    <property type="entry name" value="30S ribosomal protein S13"/>
    <property type="match status" value="1"/>
</dbReference>
<dbReference type="FunFam" id="4.10.910.10:FF:000001">
    <property type="entry name" value="30S ribosomal protein S13"/>
    <property type="match status" value="1"/>
</dbReference>
<dbReference type="Gene3D" id="1.10.8.50">
    <property type="match status" value="1"/>
</dbReference>
<dbReference type="Gene3D" id="4.10.910.10">
    <property type="entry name" value="30s ribosomal protein s13, domain 2"/>
    <property type="match status" value="1"/>
</dbReference>
<dbReference type="HAMAP" id="MF_01315">
    <property type="entry name" value="Ribosomal_uS13"/>
    <property type="match status" value="1"/>
</dbReference>
<dbReference type="InterPro" id="IPR027437">
    <property type="entry name" value="Rbsml_uS13_C"/>
</dbReference>
<dbReference type="InterPro" id="IPR001892">
    <property type="entry name" value="Ribosomal_uS13"/>
</dbReference>
<dbReference type="InterPro" id="IPR010979">
    <property type="entry name" value="Ribosomal_uS13-like_H2TH"/>
</dbReference>
<dbReference type="InterPro" id="IPR019980">
    <property type="entry name" value="Ribosomal_uS13_bac-type"/>
</dbReference>
<dbReference type="InterPro" id="IPR018269">
    <property type="entry name" value="Ribosomal_uS13_CS"/>
</dbReference>
<dbReference type="NCBIfam" id="TIGR03631">
    <property type="entry name" value="uS13_bact"/>
    <property type="match status" value="1"/>
</dbReference>
<dbReference type="PANTHER" id="PTHR10871">
    <property type="entry name" value="30S RIBOSOMAL PROTEIN S13/40S RIBOSOMAL PROTEIN S18"/>
    <property type="match status" value="1"/>
</dbReference>
<dbReference type="PANTHER" id="PTHR10871:SF1">
    <property type="entry name" value="SMALL RIBOSOMAL SUBUNIT PROTEIN US13M"/>
    <property type="match status" value="1"/>
</dbReference>
<dbReference type="Pfam" id="PF00416">
    <property type="entry name" value="Ribosomal_S13"/>
    <property type="match status" value="1"/>
</dbReference>
<dbReference type="PIRSF" id="PIRSF002134">
    <property type="entry name" value="Ribosomal_S13"/>
    <property type="match status" value="1"/>
</dbReference>
<dbReference type="SUPFAM" id="SSF46946">
    <property type="entry name" value="S13-like H2TH domain"/>
    <property type="match status" value="1"/>
</dbReference>
<dbReference type="PROSITE" id="PS00646">
    <property type="entry name" value="RIBOSOMAL_S13_1"/>
    <property type="match status" value="1"/>
</dbReference>
<dbReference type="PROSITE" id="PS50159">
    <property type="entry name" value="RIBOSOMAL_S13_2"/>
    <property type="match status" value="1"/>
</dbReference>
<comment type="function">
    <text evidence="1">Located at the top of the head of the 30S subunit, it contacts several helices of the 16S rRNA. In the 70S ribosome it contacts the 23S rRNA (bridge B1a) and protein L5 of the 50S subunit (bridge B1b), connecting the 2 subunits; these bridges are implicated in subunit movement. Contacts the tRNAs in the A and P-sites.</text>
</comment>
<comment type="subunit">
    <text evidence="1">Part of the 30S ribosomal subunit. Forms a loose heterodimer with protein S19. Forms two bridges to the 50S subunit in the 70S ribosome.</text>
</comment>
<comment type="similarity">
    <text evidence="1">Belongs to the universal ribosomal protein uS13 family.</text>
</comment>
<proteinExistence type="inferred from homology"/>
<evidence type="ECO:0000255" key="1">
    <source>
        <dbReference type="HAMAP-Rule" id="MF_01315"/>
    </source>
</evidence>
<evidence type="ECO:0000256" key="2">
    <source>
        <dbReference type="SAM" id="MobiDB-lite"/>
    </source>
</evidence>
<evidence type="ECO:0000305" key="3"/>
<feature type="chain" id="PRO_1000141215" description="Small ribosomal subunit protein uS13">
    <location>
        <begin position="1"/>
        <end position="126"/>
    </location>
</feature>
<feature type="region of interest" description="Disordered" evidence="2">
    <location>
        <begin position="99"/>
        <end position="126"/>
    </location>
</feature>
<feature type="compositionally biased region" description="Basic residues" evidence="2">
    <location>
        <begin position="108"/>
        <end position="126"/>
    </location>
</feature>
<organism>
    <name type="scientific">Azobacteroides pseudotrichonymphae genomovar. CFP2</name>
    <dbReference type="NCBI Taxonomy" id="511995"/>
    <lineage>
        <taxon>Bacteria</taxon>
        <taxon>Pseudomonadati</taxon>
        <taxon>Bacteroidota</taxon>
        <taxon>Bacteroidia</taxon>
        <taxon>Bacteroidales</taxon>
        <taxon>Candidatus Azobacteroides</taxon>
    </lineage>
</organism>